<organism>
    <name type="scientific">Yersinia pestis (strain Pestoides F)</name>
    <dbReference type="NCBI Taxonomy" id="386656"/>
    <lineage>
        <taxon>Bacteria</taxon>
        <taxon>Pseudomonadati</taxon>
        <taxon>Pseudomonadota</taxon>
        <taxon>Gammaproteobacteria</taxon>
        <taxon>Enterobacterales</taxon>
        <taxon>Yersiniaceae</taxon>
        <taxon>Yersinia</taxon>
    </lineage>
</organism>
<accession>A4TMR4</accession>
<reference key="1">
    <citation type="submission" date="2007-02" db="EMBL/GenBank/DDBJ databases">
        <title>Complete sequence of chromosome of Yersinia pestis Pestoides F.</title>
        <authorList>
            <consortium name="US DOE Joint Genome Institute"/>
            <person name="Copeland A."/>
            <person name="Lucas S."/>
            <person name="Lapidus A."/>
            <person name="Barry K."/>
            <person name="Detter J.C."/>
            <person name="Glavina del Rio T."/>
            <person name="Hammon N."/>
            <person name="Israni S."/>
            <person name="Dalin E."/>
            <person name="Tice H."/>
            <person name="Pitluck S."/>
            <person name="Di Bartolo G."/>
            <person name="Chain P."/>
            <person name="Malfatti S."/>
            <person name="Shin M."/>
            <person name="Vergez L."/>
            <person name="Schmutz J."/>
            <person name="Larimer F."/>
            <person name="Land M."/>
            <person name="Hauser L."/>
            <person name="Worsham P."/>
            <person name="Chu M."/>
            <person name="Bearden S."/>
            <person name="Garcia E."/>
            <person name="Richardson P."/>
        </authorList>
    </citation>
    <scope>NUCLEOTIDE SEQUENCE [LARGE SCALE GENOMIC DNA]</scope>
    <source>
        <strain>Pestoides F</strain>
    </source>
</reference>
<protein>
    <recommendedName>
        <fullName evidence="1">Putative multidrug resistance protein MdtD</fullName>
    </recommendedName>
</protein>
<proteinExistence type="inferred from homology"/>
<keyword id="KW-0997">Cell inner membrane</keyword>
<keyword id="KW-1003">Cell membrane</keyword>
<keyword id="KW-0472">Membrane</keyword>
<keyword id="KW-0812">Transmembrane</keyword>
<keyword id="KW-1133">Transmembrane helix</keyword>
<keyword id="KW-0813">Transport</keyword>
<gene>
    <name evidence="1" type="primary">mdtD</name>
    <name type="ordered locus">YPDSF_2201</name>
</gene>
<feature type="chain" id="PRO_1000069267" description="Putative multidrug resistance protein MdtD">
    <location>
        <begin position="1"/>
        <end position="465"/>
    </location>
</feature>
<feature type="transmembrane region" description="Helical" evidence="1">
    <location>
        <begin position="12"/>
        <end position="32"/>
    </location>
</feature>
<feature type="transmembrane region" description="Helical" evidence="1">
    <location>
        <begin position="49"/>
        <end position="69"/>
    </location>
</feature>
<feature type="transmembrane region" description="Helical" evidence="1">
    <location>
        <begin position="72"/>
        <end position="92"/>
    </location>
</feature>
<feature type="transmembrane region" description="Helical" evidence="1">
    <location>
        <begin position="102"/>
        <end position="124"/>
    </location>
</feature>
<feature type="transmembrane region" description="Helical" evidence="1">
    <location>
        <begin position="138"/>
        <end position="158"/>
    </location>
</feature>
<feature type="transmembrane region" description="Helical" evidence="1">
    <location>
        <begin position="165"/>
        <end position="185"/>
    </location>
</feature>
<feature type="transmembrane region" description="Helical" evidence="1">
    <location>
        <begin position="195"/>
        <end position="215"/>
    </location>
</feature>
<feature type="transmembrane region" description="Helical" evidence="1">
    <location>
        <begin position="219"/>
        <end position="239"/>
    </location>
</feature>
<feature type="transmembrane region" description="Helical" evidence="1">
    <location>
        <begin position="267"/>
        <end position="287"/>
    </location>
</feature>
<feature type="transmembrane region" description="Helical" evidence="1">
    <location>
        <begin position="290"/>
        <end position="310"/>
    </location>
</feature>
<feature type="transmembrane region" description="Helical" evidence="1">
    <location>
        <begin position="342"/>
        <end position="362"/>
    </location>
</feature>
<feature type="transmembrane region" description="Helical" evidence="1">
    <location>
        <begin position="393"/>
        <end position="413"/>
    </location>
</feature>
<feature type="transmembrane region" description="Helical" evidence="1">
    <location>
        <begin position="430"/>
        <end position="450"/>
    </location>
</feature>
<evidence type="ECO:0000255" key="1">
    <source>
        <dbReference type="HAMAP-Rule" id="MF_01577"/>
    </source>
</evidence>
<sequence>MVTQATSVRWQLWIVAFGFFMQTLDTTIVNTALPSIAASLGENPLRMQSVIVSYVLTVAVMLPASGWLADRIGVKWVFFSAIILFTFGSLMCAQSATLNELILSRVLQGVGGAMMVPVGRLTVMKIVPREQYMAAMAFVTLPGQIGPLVGPALGGFLVEFASWHWIFLINLPVGVIGALATLLLMPNHKMSTRRFDISGFIMLAIGMATLTLALDGHTGLGLSPLAIAGLILCGVIALGSYWWHALGNRFALFSLHLFKNKIYTLGLVGSMSARIGSGMLPFMTPIFLQIGLGFSPFHAGLMMIPMIIGSMGMKRIIVQVVNRFGYRRVLVNATLLLAVVSLSLPLVAIMGWTLLMPVVLFFQGMLNALRFSTMNTLTLKTLPDRLASSGNSLLSMAMQLSMSIGVSTAGILLGTFAHHQVATNTPATHSAFLYSYLCMAIIIALPALIFNRVPPDTGANRHLAR</sequence>
<dbReference type="EMBL" id="CP000668">
    <property type="protein sequence ID" value="ABP40576.1"/>
    <property type="molecule type" value="Genomic_DNA"/>
</dbReference>
<dbReference type="RefSeq" id="WP_002209795.1">
    <property type="nucleotide sequence ID" value="NZ_CP009715.1"/>
</dbReference>
<dbReference type="SMR" id="A4TMR4"/>
<dbReference type="KEGG" id="ypp:YPDSF_2201"/>
<dbReference type="PATRIC" id="fig|386656.14.peg.3681"/>
<dbReference type="GO" id="GO:0005886">
    <property type="term" value="C:plasma membrane"/>
    <property type="evidence" value="ECO:0007669"/>
    <property type="project" value="UniProtKB-SubCell"/>
</dbReference>
<dbReference type="GO" id="GO:0022857">
    <property type="term" value="F:transmembrane transporter activity"/>
    <property type="evidence" value="ECO:0007669"/>
    <property type="project" value="UniProtKB-UniRule"/>
</dbReference>
<dbReference type="CDD" id="cd17503">
    <property type="entry name" value="MFS_LmrB_MDR_like"/>
    <property type="match status" value="1"/>
</dbReference>
<dbReference type="FunFam" id="1.20.1250.20:FF:000021">
    <property type="entry name" value="Putative multidrug resistance protein MdtD"/>
    <property type="match status" value="1"/>
</dbReference>
<dbReference type="FunFam" id="1.20.1720.10:FF:000001">
    <property type="entry name" value="Putative multidrug resistance protein MdtD"/>
    <property type="match status" value="1"/>
</dbReference>
<dbReference type="Gene3D" id="1.20.1250.20">
    <property type="entry name" value="MFS general substrate transporter like domains"/>
    <property type="match status" value="1"/>
</dbReference>
<dbReference type="Gene3D" id="1.20.1720.10">
    <property type="entry name" value="Multidrug resistance protein D"/>
    <property type="match status" value="1"/>
</dbReference>
<dbReference type="HAMAP" id="MF_01577">
    <property type="entry name" value="MFS_MdtD"/>
    <property type="match status" value="1"/>
</dbReference>
<dbReference type="InterPro" id="IPR004638">
    <property type="entry name" value="EmrB-like"/>
</dbReference>
<dbReference type="InterPro" id="IPR011701">
    <property type="entry name" value="MFS"/>
</dbReference>
<dbReference type="InterPro" id="IPR020846">
    <property type="entry name" value="MFS_dom"/>
</dbReference>
<dbReference type="InterPro" id="IPR036259">
    <property type="entry name" value="MFS_trans_sf"/>
</dbReference>
<dbReference type="InterPro" id="IPR023721">
    <property type="entry name" value="Multi-R_MdtD"/>
</dbReference>
<dbReference type="NCBIfam" id="TIGR00711">
    <property type="entry name" value="efflux_EmrB"/>
    <property type="match status" value="1"/>
</dbReference>
<dbReference type="NCBIfam" id="NF007799">
    <property type="entry name" value="PRK10504.1"/>
    <property type="match status" value="1"/>
</dbReference>
<dbReference type="PANTHER" id="PTHR42718:SF46">
    <property type="entry name" value="BLR6921 PROTEIN"/>
    <property type="match status" value="1"/>
</dbReference>
<dbReference type="PANTHER" id="PTHR42718">
    <property type="entry name" value="MAJOR FACILITATOR SUPERFAMILY MULTIDRUG TRANSPORTER MFSC"/>
    <property type="match status" value="1"/>
</dbReference>
<dbReference type="Pfam" id="PF07690">
    <property type="entry name" value="MFS_1"/>
    <property type="match status" value="1"/>
</dbReference>
<dbReference type="PRINTS" id="PR01036">
    <property type="entry name" value="TCRTETB"/>
</dbReference>
<dbReference type="SUPFAM" id="SSF103473">
    <property type="entry name" value="MFS general substrate transporter"/>
    <property type="match status" value="1"/>
</dbReference>
<dbReference type="PROSITE" id="PS50850">
    <property type="entry name" value="MFS"/>
    <property type="match status" value="1"/>
</dbReference>
<name>MDTD_YERPP</name>
<comment type="subcellular location">
    <subcellularLocation>
        <location evidence="1">Cell inner membrane</location>
        <topology evidence="1">Multi-pass membrane protein</topology>
    </subcellularLocation>
</comment>
<comment type="similarity">
    <text evidence="1">Belongs to the major facilitator superfamily. TCR/Tet family.</text>
</comment>